<name>COWN_RHOPT</name>
<organism>
    <name type="scientific">Rhodopseudomonas palustris (strain TIE-1)</name>
    <dbReference type="NCBI Taxonomy" id="395960"/>
    <lineage>
        <taxon>Bacteria</taxon>
        <taxon>Pseudomonadati</taxon>
        <taxon>Pseudomonadota</taxon>
        <taxon>Alphaproteobacteria</taxon>
        <taxon>Hyphomicrobiales</taxon>
        <taxon>Nitrobacteraceae</taxon>
        <taxon>Rhodopseudomonas</taxon>
    </lineage>
</organism>
<protein>
    <recommendedName>
        <fullName evidence="1">N(2)-fixation sustaining protein CowN</fullName>
    </recommendedName>
    <alternativeName>
        <fullName evidence="1">CO weal-nitrogenase</fullName>
    </alternativeName>
</protein>
<evidence type="ECO:0000255" key="1">
    <source>
        <dbReference type="HAMAP-Rule" id="MF_02117"/>
    </source>
</evidence>
<keyword id="KW-0535">Nitrogen fixation</keyword>
<gene>
    <name evidence="1" type="primary">cowN</name>
    <name type="ordered locus">Rpal_2449</name>
</gene>
<accession>B3QEP7</accession>
<feature type="chain" id="PRO_0000407272" description="N(2)-fixation sustaining protein CowN">
    <location>
        <begin position="1"/>
        <end position="92"/>
    </location>
</feature>
<reference key="1">
    <citation type="submission" date="2008-05" db="EMBL/GenBank/DDBJ databases">
        <title>Complete sequence of Rhodopseudomonas palustris TIE-1.</title>
        <authorList>
            <consortium name="US DOE Joint Genome Institute"/>
            <person name="Lucas S."/>
            <person name="Copeland A."/>
            <person name="Lapidus A."/>
            <person name="Glavina del Rio T."/>
            <person name="Dalin E."/>
            <person name="Tice H."/>
            <person name="Pitluck S."/>
            <person name="Chain P."/>
            <person name="Malfatti S."/>
            <person name="Shin M."/>
            <person name="Vergez L."/>
            <person name="Lang D."/>
            <person name="Schmutz J."/>
            <person name="Larimer F."/>
            <person name="Land M."/>
            <person name="Hauser L."/>
            <person name="Kyrpides N."/>
            <person name="Mikhailova N."/>
            <person name="Emerson D."/>
            <person name="Newman D.K."/>
            <person name="Roden E."/>
            <person name="Richardson P."/>
        </authorList>
    </citation>
    <scope>NUCLEOTIDE SEQUENCE [LARGE SCALE GENOMIC DNA]</scope>
    <source>
        <strain>TIE-1</strain>
    </source>
</reference>
<comment type="function">
    <text evidence="1">Is required to sustain N(2)-dependent growth in the presence of low levels of carbon monoxide (CO). Probably acts by protecting the N(2) fixation ability of the nitrogenase complex, which is inactivated in the presence of CO.</text>
</comment>
<comment type="similarity">
    <text evidence="1">Belongs to the CowN family.</text>
</comment>
<sequence length="92" mass="11016">MSASFDRYVSFQHCDWEGRSERVMQRLQRHVEAAENPFWAYFAQKRAELRDKQGLDDLRILHNYLPTLRELLEDNGDLETLEMLEDLEANLM</sequence>
<dbReference type="EMBL" id="CP001096">
    <property type="protein sequence ID" value="ACF00963.1"/>
    <property type="molecule type" value="Genomic_DNA"/>
</dbReference>
<dbReference type="RefSeq" id="WP_011157711.1">
    <property type="nucleotide sequence ID" value="NC_011004.1"/>
</dbReference>
<dbReference type="GeneID" id="66893205"/>
<dbReference type="KEGG" id="rpt:Rpal_2449"/>
<dbReference type="HOGENOM" id="CLU_149349_0_0_5"/>
<dbReference type="OrthoDB" id="7689335at2"/>
<dbReference type="Proteomes" id="UP000001725">
    <property type="component" value="Chromosome"/>
</dbReference>
<dbReference type="GO" id="GO:0009399">
    <property type="term" value="P:nitrogen fixation"/>
    <property type="evidence" value="ECO:0007669"/>
    <property type="project" value="UniProtKB-UniRule"/>
</dbReference>
<dbReference type="HAMAP" id="MF_02117">
    <property type="entry name" value="CowN"/>
    <property type="match status" value="1"/>
</dbReference>
<dbReference type="InterPro" id="IPR024899">
    <property type="entry name" value="CowN"/>
</dbReference>
<dbReference type="NCBIfam" id="NF033689">
    <property type="entry name" value="N2Fix_CO_CowN"/>
    <property type="match status" value="1"/>
</dbReference>
<dbReference type="Pfam" id="PF20543">
    <property type="entry name" value="CowN"/>
    <property type="match status" value="1"/>
</dbReference>
<proteinExistence type="inferred from homology"/>